<proteinExistence type="evidence at protein level"/>
<accession>P22756</accession>
<evidence type="ECO:0000250" key="1">
    <source>
        <dbReference type="UniProtKB" id="P39086"/>
    </source>
</evidence>
<evidence type="ECO:0000255" key="2"/>
<evidence type="ECO:0000269" key="3">
    <source>
    </source>
</evidence>
<evidence type="ECO:0000269" key="4">
    <source>
    </source>
</evidence>
<evidence type="ECO:0000269" key="5">
    <source>
    </source>
</evidence>
<evidence type="ECO:0000269" key="6">
    <source>
    </source>
</evidence>
<evidence type="ECO:0000269" key="7">
    <source>
    </source>
</evidence>
<evidence type="ECO:0000269" key="8">
    <source>
    </source>
</evidence>
<evidence type="ECO:0000269" key="9">
    <source>
    </source>
</evidence>
<evidence type="ECO:0000269" key="10">
    <source>
    </source>
</evidence>
<evidence type="ECO:0000269" key="11">
    <source>
    </source>
</evidence>
<evidence type="ECO:0000269" key="12">
    <source>
    </source>
</evidence>
<evidence type="ECO:0000269" key="13">
    <source>
    </source>
</evidence>
<evidence type="ECO:0000269" key="14">
    <source>
    </source>
</evidence>
<evidence type="ECO:0000305" key="15"/>
<evidence type="ECO:0000305" key="16">
    <source>
    </source>
</evidence>
<evidence type="ECO:0007744" key="17">
    <source>
        <dbReference type="PDB" id="1YCJ"/>
    </source>
</evidence>
<evidence type="ECO:0007829" key="18">
    <source>
        <dbReference type="PDB" id="3GBA"/>
    </source>
</evidence>
<evidence type="ECO:0007829" key="19">
    <source>
        <dbReference type="PDB" id="6FZ4"/>
    </source>
</evidence>
<name>GRIK1_RAT</name>
<keyword id="KW-0002">3D-structure</keyword>
<keyword id="KW-0025">Alternative splicing</keyword>
<keyword id="KW-1003">Cell membrane</keyword>
<keyword id="KW-1015">Disulfide bond</keyword>
<keyword id="KW-0325">Glycoprotein</keyword>
<keyword id="KW-0407">Ion channel</keyword>
<keyword id="KW-0406">Ion transport</keyword>
<keyword id="KW-1071">Ligand-gated ion channel</keyword>
<keyword id="KW-0472">Membrane</keyword>
<keyword id="KW-0597">Phosphoprotein</keyword>
<keyword id="KW-0628">Postsynaptic cell membrane</keyword>
<keyword id="KW-0675">Receptor</keyword>
<keyword id="KW-1185">Reference proteome</keyword>
<keyword id="KW-0691">RNA editing</keyword>
<keyword id="KW-0732">Signal</keyword>
<keyword id="KW-0770">Synapse</keyword>
<keyword id="KW-0812">Transmembrane</keyword>
<keyword id="KW-1133">Transmembrane helix</keyword>
<keyword id="KW-0813">Transport</keyword>
<comment type="function">
    <text evidence="4 5 6 7 10 12 13 14">Ionotropic glutamate receptor that functions as a cation-permeable ligand-gated ion channel, gated by L-glutamate and the glutamatergic agonist kainic acid. L-glutamate acts as an excitatory neurotransmitter at many synapses in the central nervous system. Binding of the excitatory neurotransmitter L-glutamate induces a conformation change, leading to the opening of the cation channel, and thereby converts the chemical signal to an electrical impulse. The receptor then desensitizes rapidly and enters a transient inactive state, characterized by the presence of bound agonist.</text>
</comment>
<comment type="catalytic activity">
    <reaction evidence="4 5">
        <text>Ca(2+)(in) = Ca(2+)(out)</text>
        <dbReference type="Rhea" id="RHEA:29671"/>
        <dbReference type="ChEBI" id="CHEBI:29108"/>
    </reaction>
</comment>
<comment type="subunit">
    <text evidence="8 10 11 13">Homotetramer or heterotetramer of pore-forming glutamate receptor subunits. Tetramers may be formed by the dimerization of dimers (PubMed:15710405, PubMed:16540562). Can form functional heteromeric receptors with GRIK4 and GRIK5 (PubMed:25139762). Interacts with KLHL17 (PubMed:17062563).</text>
</comment>
<comment type="interaction">
    <interactant intactId="EBI-15612757">
        <id>P22756</id>
    </interactant>
    <interactant intactId="EBI-15612757">
        <id>P22756</id>
        <label>Grik1</label>
    </interactant>
    <organismsDiffer>false</organismsDiffer>
    <experiments>3</experiments>
</comment>
<comment type="interaction">
    <interactant intactId="EBI-15612757">
        <id>P22756</id>
    </interactant>
    <interactant intactId="EBI-7809795">
        <id>P42260</id>
        <label>Grik2</label>
    </interactant>
    <organismsDiffer>false</organismsDiffer>
    <experiments>4</experiments>
</comment>
<comment type="interaction">
    <interactant intactId="EBI-15612757">
        <id>P22756</id>
    </interactant>
    <interactant intactId="EBI-48420651">
        <id>P42264</id>
        <label>Grik3</label>
    </interactant>
    <organismsDiffer>false</organismsDiffer>
    <experiments>4</experiments>
</comment>
<comment type="subcellular location">
    <subcellularLocation>
        <location evidence="16">Cell membrane</location>
        <topology evidence="2">Multi-pass membrane protein</topology>
    </subcellularLocation>
    <subcellularLocation>
        <location evidence="16">Postsynaptic cell membrane</location>
        <topology evidence="2">Multi-pass membrane protein</topology>
    </subcellularLocation>
</comment>
<comment type="alternative products">
    <event type="alternative splicing"/>
    <isoform>
        <id>P22756-1</id>
        <name>Glur5-2C</name>
        <sequence type="displayed"/>
    </isoform>
    <isoform>
        <id>P22756-2</id>
        <name>Glur5-2</name>
        <sequence type="described" ref="VSP_000129 VSP_000130"/>
    </isoform>
    <isoform>
        <id>P22756-3</id>
        <name>Glur5-2A</name>
        <sequence type="described" ref="VSP_000131 VSP_000132"/>
    </isoform>
    <isoform>
        <id>P22756-4</id>
        <name>Glur5-2B</name>
        <name>Glur5-1</name>
        <sequence type="described" ref="VSP_000130"/>
    </isoform>
    <text>Additional isoforms seem to exist.</text>
</comment>
<comment type="tissue specificity">
    <text evidence="3 12 14">Expressed in the olfactory bulb (at protein level) (PubMed:10023812). Expressed in subsets of neurons throughout the developing and adult central and peripheral nervous systems. In the CNS principally in the medial amygdaloid nuclei, medial habenulae, pyriform and cingulate cortices, and Purkinje cell layer. Also highly expressed in embryonic and adult dorsal root ganglia (PubMed:1977421). Expressed at high levels in the trigeminal ganglion neurons (PubMed:9254673).</text>
</comment>
<comment type="developmental stage">
    <text evidence="4">Expressed in the embryonic dorsal root ganglion neurons. This receptor is predominantly calcium-permeable in late embryonic and newborn rats and become fully calcium-impermeable later in the first postnatal week.</text>
</comment>
<comment type="RNA editing">
    <location>
        <position position="636"/>
    </location>
    <text evidence="4">Partially edited. The presence of Gln at position 636 (non-edited) determines channels with low calcium permeability, whereas an arginine residue (edited) determines a higher calcium permeability.</text>
</comment>
<comment type="miscellaneous">
    <text evidence="1">The postsynaptic actions of Glu are mediated by a variety of receptors that are named according to their selective agonists. This receptor binds domoate &gt; kainate &gt; L-glutamate = quisqualate &gt; CNQX = DNQX &gt; AMPA &gt; dihydrokainate &gt; NMDA (By similarity).</text>
</comment>
<comment type="similarity">
    <text evidence="15">Belongs to the glutamate-gated ion channel (TC 1.A.10.1) family. GRIK1 subfamily.</text>
</comment>
<protein>
    <recommendedName>
        <fullName>Glutamate receptor ionotropic, kainate 1</fullName>
        <shortName>GluK1</shortName>
    </recommendedName>
    <alternativeName>
        <fullName>Glutamate receptor 5</fullName>
        <shortName>GluR-5</shortName>
        <shortName>GluR5</shortName>
    </alternativeName>
</protein>
<reference key="1">
    <citation type="journal article" date="1992" name="EMBO J.">
        <title>A glutamate receptor channel with high affinity for domoate and kainate.</title>
        <authorList>
            <person name="Sommer B."/>
            <person name="Burnashev N."/>
            <person name="Verdoorn T.A."/>
            <person name="Keinaenen K."/>
            <person name="Sakmann B."/>
            <person name="Seeburg P.H."/>
        </authorList>
    </citation>
    <scope>NUCLEOTIDE SEQUENCE [MRNA]</scope>
    <scope>ALTERNATIVE SPLICING</scope>
    <scope>FUNCTION</scope>
    <source>
        <tissue>Brain</tissue>
    </source>
</reference>
<reference key="2">
    <citation type="journal article" date="1990" name="Neuron">
        <title>Cloning of a novel glutamate receptor subunit, GluR5: expression in the nervous system during development.</title>
        <authorList>
            <person name="Bettler B."/>
            <person name="Boulter J."/>
            <person name="Hermans-Borgmeyer I."/>
            <person name="O'Shea-Greenfield A."/>
            <person name="Deneris E.S."/>
            <person name="Moll C."/>
            <person name="Borgmeyer U."/>
            <person name="Hollmann M."/>
            <person name="Heinemann S.F."/>
        </authorList>
    </citation>
    <scope>NUCLEOTIDE SEQUENCE [MRNA]</scope>
    <scope>FUNCTION</scope>
    <scope>TISSUE SPECIFICITY</scope>
    <source>
        <tissue>Brain</tissue>
    </source>
</reference>
<reference key="3">
    <citation type="journal article" date="2006" name="J. Biol. Chem.">
        <title>Actinfilin is a Cul3 substrate adaptor, linking GluR6 kainate receptor subunits to the ubiquitin-proteasome pathway.</title>
        <authorList>
            <person name="Salinas G.D."/>
            <person name="Blair L.A."/>
            <person name="Needleman L.A."/>
            <person name="Gonzales J.D."/>
            <person name="Chen Y."/>
            <person name="Li M."/>
            <person name="Singer J.D."/>
            <person name="Marshall J."/>
        </authorList>
    </citation>
    <scope>INTERACTION WITH KLHL17</scope>
</reference>
<reference key="4">
    <citation type="journal article" date="1992" name="FEBS Lett.">
        <title>High-affinity kainate and domoate receptors in rat brain.</title>
        <authorList>
            <person name="Lomeli H."/>
            <person name="Wisden W."/>
            <person name="Koehler M."/>
            <person name="Keinaenen K."/>
            <person name="Sommer B."/>
            <person name="Seeburg P.H."/>
        </authorList>
    </citation>
    <scope>NUCLEOTIDE SEQUENCE [MRNA]</scope>
    <scope>FUNCTION</scope>
    <source>
        <tissue>Brain</tissue>
    </source>
</reference>
<reference key="5">
    <citation type="journal article" date="1997" name="J. Neurosci.">
        <title>Glutamate receptor subunits GluR5 and KA-2 are coexpressed in rat trigeminal ganglion neurons.</title>
        <authorList>
            <person name="Sahara Y."/>
            <person name="Noro N."/>
            <person name="Iida Y."/>
            <person name="Soma K."/>
            <person name="Nakamura Y."/>
        </authorList>
    </citation>
    <scope>FUNCTION</scope>
    <scope>TISSUE SPECIFICITY</scope>
</reference>
<reference key="6">
    <citation type="journal article" date="1999" name="J. Comp. Neurol.">
        <title>Differential distribution of ionotropic glutamate receptor subunits in the rat olfactory bulb.</title>
        <authorList>
            <person name="Montague A.A."/>
            <person name="Greer C.A."/>
        </authorList>
    </citation>
    <scope>SUBCELLULAR LOCATION</scope>
    <scope>TISSUE SPECIFICITY</scope>
</reference>
<reference key="7">
    <citation type="journal article" date="2001" name="J. Neurosci.">
        <title>Kainate receptors expressed by a subpopulation of developing nociceptors rapidly switch from high to low Ca2+ permeability.</title>
        <authorList>
            <person name="Lee C.J."/>
            <person name="Kong H."/>
            <person name="Manzini M.C."/>
            <person name="Albuquerque C."/>
            <person name="Chao M.V."/>
            <person name="MacDermott A.B."/>
        </authorList>
    </citation>
    <scope>FUNCTION</scope>
    <scope>TRANSPORTER ACTIVITY</scope>
    <scope>RNA EDITING</scope>
    <scope>DEVELOPMENTAL STAGE</scope>
</reference>
<reference key="8">
    <citation type="journal article" date="2003" name="Neuron">
        <title>A role for Ca2+ stores in kainate receptor-dependent synaptic facilitation and LTP at mossy fiber synapses in the hippocampus.</title>
        <authorList>
            <person name="Lauri S.E."/>
            <person name="Bortolotto Z.A."/>
            <person name="Nistico R."/>
            <person name="Bleakman D."/>
            <person name="Ornstein P.L."/>
            <person name="Lodge D."/>
            <person name="Isaac J.T."/>
            <person name="Collingridge G.L."/>
        </authorList>
    </citation>
    <scope>FUNCTION</scope>
    <scope>TRANSPORTER ACTIVITY</scope>
</reference>
<reference key="9">
    <citation type="journal article" date="2014" name="Neuroscience">
        <title>Contributions of different kainate receptor subunits to the properties of recombinant homomeric and heteromeric receptors.</title>
        <authorList>
            <person name="Fisher M.T."/>
            <person name="Fisher J.L."/>
        </authorList>
    </citation>
    <scope>FUNCTION</scope>
    <scope>SUBUNIT</scope>
</reference>
<reference key="10">
    <citation type="journal article" date="2005" name="FEBS Lett.">
        <title>Crystal structure of the kainate receptor GluR5 ligand-binding core in complex with (S)-glutamate.</title>
        <authorList>
            <person name="Naur P."/>
            <person name="Vestergaard B."/>
            <person name="Skov L.K."/>
            <person name="Egebjerg J."/>
            <person name="Gajhede M."/>
            <person name="Kastrup J.S."/>
        </authorList>
    </citation>
    <scope>X-RAY CRYSTALLOGRAPHY (1.95 ANGSTROMS) OF 445-820 IN COMPLEX WITH GLUTAMATE</scope>
    <scope>SUBUNIT</scope>
</reference>
<reference key="11">
    <citation type="journal article" date="2005" name="Neuron">
        <title>Crystal structures of the GluR5 and GluR6 ligand binding cores: molecular mechanisms underlying kainate receptor selectivity.</title>
        <authorList>
            <person name="Mayer M.L."/>
        </authorList>
    </citation>
    <scope>X-RAY CRYSTALLOGRAPHY (2.1 ANGSTROMS) OF 446-821 IN COMPLEX WITH GLUTAMATE</scope>
    <scope>DISULFIDE BOND</scope>
</reference>
<reference key="12">
    <citation type="journal article" date="2006" name="J. Neurosci.">
        <title>Crystal structures of the kainate receptor GluR5 ligand binding core dimer with novel GluR5-selective antagonists.</title>
        <authorList>
            <person name="Mayer M.L."/>
            <person name="Ghosal A."/>
            <person name="Dolman N.P."/>
            <person name="Jane D.E."/>
        </authorList>
    </citation>
    <scope>X-RAY CRYSTALLOGRAPHY (1.74 ANGSTROMS) OF 446-820 IN COMPLEXES WITH UBP302 AND UBP310</scope>
    <scope>FUNCTION</scope>
    <scope>SUBUNIT</scope>
</reference>
<dbReference type="EMBL" id="M83560">
    <property type="protein sequence ID" value="AAA02873.1"/>
    <property type="molecule type" value="mRNA"/>
</dbReference>
<dbReference type="EMBL" id="M83561">
    <property type="protein sequence ID" value="AAA02874.1"/>
    <property type="molecule type" value="mRNA"/>
</dbReference>
<dbReference type="EMBL" id="Z11712">
    <property type="protein sequence ID" value="CAA77775.1"/>
    <property type="molecule type" value="mRNA"/>
</dbReference>
<dbReference type="EMBL" id="Z11713">
    <property type="protein sequence ID" value="CAA77776.1"/>
    <property type="molecule type" value="mRNA"/>
</dbReference>
<dbReference type="EMBL" id="Z11714">
    <property type="protein sequence ID" value="CAA77777.1"/>
    <property type="molecule type" value="mRNA"/>
</dbReference>
<dbReference type="PIR" id="S19808">
    <property type="entry name" value="S19808"/>
</dbReference>
<dbReference type="RefSeq" id="NP_001104584.1">
    <property type="nucleotide sequence ID" value="NM_001111114.1"/>
</dbReference>
<dbReference type="RefSeq" id="NP_001104587.1">
    <property type="nucleotide sequence ID" value="NM_001111117.1"/>
</dbReference>
<dbReference type="RefSeq" id="NP_058937.1">
    <property type="nucleotide sequence ID" value="NM_017241.2"/>
</dbReference>
<dbReference type="PDB" id="1TXF">
    <property type="method" value="X-ray"/>
    <property type="resolution" value="2.10 A"/>
    <property type="chains" value="A=446-559, A=682-821"/>
</dbReference>
<dbReference type="PDB" id="1VSO">
    <property type="method" value="X-ray"/>
    <property type="resolution" value="1.85 A"/>
    <property type="chains" value="A=445-559, A=682-820"/>
</dbReference>
<dbReference type="PDB" id="1YCJ">
    <property type="method" value="X-ray"/>
    <property type="resolution" value="1.95 A"/>
    <property type="chains" value="A/B=445-559"/>
</dbReference>
<dbReference type="PDB" id="2F34">
    <property type="method" value="X-ray"/>
    <property type="resolution" value="1.74 A"/>
    <property type="chains" value="A/B=446-559, A/B=682-821"/>
</dbReference>
<dbReference type="PDB" id="2F35">
    <property type="method" value="X-ray"/>
    <property type="resolution" value="1.87 A"/>
    <property type="chains" value="A/B=446-559, A/B=682-821"/>
</dbReference>
<dbReference type="PDB" id="2F36">
    <property type="method" value="X-ray"/>
    <property type="resolution" value="2.11 A"/>
    <property type="chains" value="A/B/C/D=446-559, A/B/C/D=682-821"/>
</dbReference>
<dbReference type="PDB" id="2OJT">
    <property type="method" value="X-ray"/>
    <property type="resolution" value="1.95 A"/>
    <property type="chains" value="A/B=446-559, A/B=682-821"/>
</dbReference>
<dbReference type="PDB" id="2PBW">
    <property type="method" value="X-ray"/>
    <property type="resolution" value="2.50 A"/>
    <property type="chains" value="A/B=445-559, A/B=682-820"/>
</dbReference>
<dbReference type="PDB" id="2QS1">
    <property type="method" value="X-ray"/>
    <property type="resolution" value="1.80 A"/>
    <property type="chains" value="A/B=446-559, A/B=682-821"/>
</dbReference>
<dbReference type="PDB" id="2QS2">
    <property type="method" value="X-ray"/>
    <property type="resolution" value="1.80 A"/>
    <property type="chains" value="A/B=446-559, A/B=682-821"/>
</dbReference>
<dbReference type="PDB" id="2QS3">
    <property type="method" value="X-ray"/>
    <property type="resolution" value="1.76 A"/>
    <property type="chains" value="A/B=446-559, A/B=682-821"/>
</dbReference>
<dbReference type="PDB" id="2QS4">
    <property type="method" value="X-ray"/>
    <property type="resolution" value="1.58 A"/>
    <property type="chains" value="A/B/C/D=446-559, A/B/C/D=682-821"/>
</dbReference>
<dbReference type="PDB" id="2WKY">
    <property type="method" value="X-ray"/>
    <property type="resolution" value="2.20 A"/>
    <property type="chains" value="A/B=445-559, A/B=667-806"/>
</dbReference>
<dbReference type="PDB" id="3C31">
    <property type="method" value="X-ray"/>
    <property type="resolution" value="1.49 A"/>
    <property type="chains" value="A/B=446-559, A/B=682-821"/>
</dbReference>
<dbReference type="PDB" id="3C32">
    <property type="method" value="X-ray"/>
    <property type="resolution" value="1.72 A"/>
    <property type="chains" value="A/B=446-559, A/B=682-821"/>
</dbReference>
<dbReference type="PDB" id="3C33">
    <property type="method" value="X-ray"/>
    <property type="resolution" value="1.72 A"/>
    <property type="chains" value="A/B=446-559, A/B=682-821"/>
</dbReference>
<dbReference type="PDB" id="3C34">
    <property type="method" value="X-ray"/>
    <property type="resolution" value="1.82 A"/>
    <property type="chains" value="A/B=446-559, A/B=682-821"/>
</dbReference>
<dbReference type="PDB" id="3C35">
    <property type="method" value="X-ray"/>
    <property type="resolution" value="1.97 A"/>
    <property type="chains" value="A/B=446-559, A/B=682-821"/>
</dbReference>
<dbReference type="PDB" id="3C36">
    <property type="method" value="X-ray"/>
    <property type="resolution" value="1.68 A"/>
    <property type="chains" value="A/B=446-559, A/B=682-821"/>
</dbReference>
<dbReference type="PDB" id="3GBA">
    <property type="method" value="X-ray"/>
    <property type="resolution" value="1.35 A"/>
    <property type="chains" value="A/B/C/D=445-559, A/B/C/D=667-820"/>
</dbReference>
<dbReference type="PDB" id="3GBB">
    <property type="method" value="X-ray"/>
    <property type="resolution" value="2.10 A"/>
    <property type="chains" value="A/B=445-559, A/B=682-820"/>
</dbReference>
<dbReference type="PDB" id="3S2V">
    <property type="method" value="X-ray"/>
    <property type="resolution" value="2.50 A"/>
    <property type="chains" value="A/B=445-559, A/B=667-805"/>
</dbReference>
<dbReference type="PDB" id="4DLD">
    <property type="method" value="X-ray"/>
    <property type="resolution" value="2.00 A"/>
    <property type="chains" value="A/B=445-559, A/B=667-805"/>
</dbReference>
<dbReference type="PDB" id="4E0X">
    <property type="method" value="X-ray"/>
    <property type="resolution" value="2.00 A"/>
    <property type="chains" value="A/B=682-820"/>
</dbReference>
<dbReference type="PDB" id="4QF9">
    <property type="method" value="X-ray"/>
    <property type="resolution" value="2.28 A"/>
    <property type="chains" value="A/B/C=445-559, A/B/C=682-820"/>
</dbReference>
<dbReference type="PDB" id="4YMB">
    <property type="method" value="X-ray"/>
    <property type="resolution" value="1.93 A"/>
    <property type="chains" value="A/B=445-559, A/B=682-820"/>
</dbReference>
<dbReference type="PDB" id="5M2V">
    <property type="method" value="X-ray"/>
    <property type="resolution" value="3.18 A"/>
    <property type="chains" value="A/B=445-559, A/B=682-820"/>
</dbReference>
<dbReference type="PDB" id="5MFQ">
    <property type="method" value="X-ray"/>
    <property type="resolution" value="1.90 A"/>
    <property type="chains" value="A/B=445-559, A/B=583-818"/>
</dbReference>
<dbReference type="PDB" id="5MFV">
    <property type="method" value="X-ray"/>
    <property type="resolution" value="2.18 A"/>
    <property type="chains" value="A/B=445-559, A/B=583-818"/>
</dbReference>
<dbReference type="PDB" id="5MFW">
    <property type="method" value="X-ray"/>
    <property type="resolution" value="2.10 A"/>
    <property type="chains" value="A/B=445-559, A/B=583-818"/>
</dbReference>
<dbReference type="PDB" id="5NEB">
    <property type="method" value="X-ray"/>
    <property type="resolution" value="2.05 A"/>
    <property type="chains" value="A/B=445-559, A/B=682-820"/>
</dbReference>
<dbReference type="PDB" id="5NF5">
    <property type="method" value="X-ray"/>
    <property type="resolution" value="2.85 A"/>
    <property type="chains" value="A/B=445-559, A/B=682-820"/>
</dbReference>
<dbReference type="PDB" id="6FZ4">
    <property type="method" value="X-ray"/>
    <property type="resolution" value="1.85 A"/>
    <property type="chains" value="A=445-559, A=682-820"/>
</dbReference>
<dbReference type="PDB" id="6SBT">
    <property type="method" value="X-ray"/>
    <property type="resolution" value="2.30 A"/>
    <property type="chains" value="A=445-559, A=682-820"/>
</dbReference>
<dbReference type="PDB" id="7LVT">
    <property type="method" value="EM"/>
    <property type="resolution" value="4.60 A"/>
    <property type="chains" value="A/B/C/D=36-949"/>
</dbReference>
<dbReference type="PDB" id="7YSJ">
    <property type="method" value="EM"/>
    <property type="resolution" value="5.20 A"/>
    <property type="chains" value="A/B/C/D=35-869"/>
</dbReference>
<dbReference type="PDB" id="7YSV">
    <property type="method" value="EM"/>
    <property type="resolution" value="8.01 A"/>
    <property type="chains" value="A/B/C/D=35-869"/>
</dbReference>
<dbReference type="PDB" id="8GPR">
    <property type="method" value="EM"/>
    <property type="resolution" value="8.20 A"/>
    <property type="chains" value="A/B/C/D=35-869"/>
</dbReference>
<dbReference type="PDB" id="8R36">
    <property type="method" value="X-ray"/>
    <property type="resolution" value="1.90 A"/>
    <property type="chains" value="A/B=445-559, A/B=682-820"/>
</dbReference>
<dbReference type="PDBsum" id="1TXF"/>
<dbReference type="PDBsum" id="1VSO"/>
<dbReference type="PDBsum" id="1YCJ"/>
<dbReference type="PDBsum" id="2F34"/>
<dbReference type="PDBsum" id="2F35"/>
<dbReference type="PDBsum" id="2F36"/>
<dbReference type="PDBsum" id="2OJT"/>
<dbReference type="PDBsum" id="2PBW"/>
<dbReference type="PDBsum" id="2QS1"/>
<dbReference type="PDBsum" id="2QS2"/>
<dbReference type="PDBsum" id="2QS3"/>
<dbReference type="PDBsum" id="2QS4"/>
<dbReference type="PDBsum" id="2WKY"/>
<dbReference type="PDBsum" id="3C31"/>
<dbReference type="PDBsum" id="3C32"/>
<dbReference type="PDBsum" id="3C33"/>
<dbReference type="PDBsum" id="3C34"/>
<dbReference type="PDBsum" id="3C35"/>
<dbReference type="PDBsum" id="3C36"/>
<dbReference type="PDBsum" id="3GBA"/>
<dbReference type="PDBsum" id="3GBB"/>
<dbReference type="PDBsum" id="3S2V"/>
<dbReference type="PDBsum" id="4DLD"/>
<dbReference type="PDBsum" id="4E0X"/>
<dbReference type="PDBsum" id="4QF9"/>
<dbReference type="PDBsum" id="4YMB"/>
<dbReference type="PDBsum" id="5M2V"/>
<dbReference type="PDBsum" id="5MFQ"/>
<dbReference type="PDBsum" id="5MFV"/>
<dbReference type="PDBsum" id="5MFW"/>
<dbReference type="PDBsum" id="5NEB"/>
<dbReference type="PDBsum" id="5NF5"/>
<dbReference type="PDBsum" id="6FZ4"/>
<dbReference type="PDBsum" id="6SBT"/>
<dbReference type="PDBsum" id="7LVT"/>
<dbReference type="PDBsum" id="7YSJ"/>
<dbReference type="PDBsum" id="7YSV"/>
<dbReference type="PDBsum" id="8GPR"/>
<dbReference type="PDBsum" id="8R36"/>
<dbReference type="EMDB" id="EMD-23017"/>
<dbReference type="SMR" id="P22756"/>
<dbReference type="BioGRID" id="248193">
    <property type="interactions" value="4"/>
</dbReference>
<dbReference type="ComplexPortal" id="CPX-8602">
    <property type="entry name" value="GluK1-GluK2 glutamate ionotropic kainate-type receptor complex"/>
</dbReference>
<dbReference type="ComplexPortal" id="CPX-8608">
    <property type="entry name" value="GluK1-GluK3-GluK5 glutamate ionotropic kainate-type receptor complex"/>
</dbReference>
<dbReference type="ComplexPortal" id="CPX-8609">
    <property type="entry name" value="GluK1-GluK2-GluK5 glutamate ionotropic kainate-type receptor complex"/>
</dbReference>
<dbReference type="ComplexPortal" id="CPX-8610">
    <property type="entry name" value="GluK1-GluK2-GluK3-GluK5 glutamate ionotropic kainate-type receptor complex"/>
</dbReference>
<dbReference type="ComplexPortal" id="CPX-8612">
    <property type="entry name" value="GluK1-GluK5 glutamate ionotropic kainate-type receptor complex"/>
</dbReference>
<dbReference type="ComplexPortal" id="CPX-8613">
    <property type="entry name" value="GluK1-GluK3 glutamate ionotropic kainate-type receptor complex"/>
</dbReference>
<dbReference type="ComplexPortal" id="CPX-8616">
    <property type="entry name" value="GluK1 glutamate ionotropic kainate-type receptor complex"/>
</dbReference>
<dbReference type="CORUM" id="P22756"/>
<dbReference type="DIP" id="DIP-29257N"/>
<dbReference type="FunCoup" id="P22756">
    <property type="interactions" value="360"/>
</dbReference>
<dbReference type="IntAct" id="P22756">
    <property type="interactions" value="3"/>
</dbReference>
<dbReference type="STRING" id="10116.ENSRNOP00000045594"/>
<dbReference type="BindingDB" id="P22756"/>
<dbReference type="ChEMBL" id="CHEMBL2919"/>
<dbReference type="DrugCentral" id="P22756"/>
<dbReference type="GuidetoPHARMACOLOGY" id="450"/>
<dbReference type="TCDB" id="1.A.10.1.5">
    <property type="family name" value="the glutamate-gated ion channel (gic) family of neurotransmitter receptors"/>
</dbReference>
<dbReference type="GlyCosmos" id="P22756">
    <property type="glycosylation" value="9 sites, No reported glycans"/>
</dbReference>
<dbReference type="GlyGen" id="P22756">
    <property type="glycosylation" value="9 sites"/>
</dbReference>
<dbReference type="iPTMnet" id="P22756"/>
<dbReference type="PhosphoSitePlus" id="P22756"/>
<dbReference type="PaxDb" id="10116-ENSRNOP00000045594"/>
<dbReference type="GeneID" id="29559"/>
<dbReference type="KEGG" id="rno:29559"/>
<dbReference type="UCSC" id="RGD:2732">
    <molecule id="P22756-1"/>
    <property type="organism name" value="rat"/>
</dbReference>
<dbReference type="AGR" id="RGD:2732"/>
<dbReference type="CTD" id="2897"/>
<dbReference type="RGD" id="2732">
    <property type="gene designation" value="Grik1"/>
</dbReference>
<dbReference type="eggNOG" id="KOG1052">
    <property type="taxonomic scope" value="Eukaryota"/>
</dbReference>
<dbReference type="InParanoid" id="P22756"/>
<dbReference type="OrthoDB" id="5984008at2759"/>
<dbReference type="PhylomeDB" id="P22756"/>
<dbReference type="Reactome" id="R-RNO-451307">
    <property type="pathway name" value="Activation of Na-permeable kainate receptors"/>
</dbReference>
<dbReference type="Reactome" id="R-RNO-451308">
    <property type="pathway name" value="Activation of Ca-permeable Kainate Receptor"/>
</dbReference>
<dbReference type="EvolutionaryTrace" id="P22756"/>
<dbReference type="PRO" id="PR:P22756"/>
<dbReference type="Proteomes" id="UP000002494">
    <property type="component" value="Unplaced"/>
</dbReference>
<dbReference type="GO" id="GO:0030425">
    <property type="term" value="C:dendrite"/>
    <property type="evidence" value="ECO:0000314"/>
    <property type="project" value="RGD"/>
</dbReference>
<dbReference type="GO" id="GO:0098978">
    <property type="term" value="C:glutamatergic synapse"/>
    <property type="evidence" value="ECO:0000314"/>
    <property type="project" value="SynGO"/>
</dbReference>
<dbReference type="GO" id="GO:0008328">
    <property type="term" value="C:ionotropic glutamate receptor complex"/>
    <property type="evidence" value="ECO:0000314"/>
    <property type="project" value="RGD"/>
</dbReference>
<dbReference type="GO" id="GO:0032983">
    <property type="term" value="C:kainate selective glutamate receptor complex"/>
    <property type="evidence" value="ECO:0000266"/>
    <property type="project" value="RGD"/>
</dbReference>
<dbReference type="GO" id="GO:0016020">
    <property type="term" value="C:membrane"/>
    <property type="evidence" value="ECO:0000266"/>
    <property type="project" value="RGD"/>
</dbReference>
<dbReference type="GO" id="GO:0043025">
    <property type="term" value="C:neuronal cell body"/>
    <property type="evidence" value="ECO:0000314"/>
    <property type="project" value="RGD"/>
</dbReference>
<dbReference type="GO" id="GO:0005886">
    <property type="term" value="C:plasma membrane"/>
    <property type="evidence" value="ECO:0000318"/>
    <property type="project" value="GO_Central"/>
</dbReference>
<dbReference type="GO" id="GO:0014069">
    <property type="term" value="C:postsynaptic density"/>
    <property type="evidence" value="ECO:0000266"/>
    <property type="project" value="RGD"/>
</dbReference>
<dbReference type="GO" id="GO:0098839">
    <property type="term" value="C:postsynaptic density membrane"/>
    <property type="evidence" value="ECO:0000318"/>
    <property type="project" value="GO_Central"/>
</dbReference>
<dbReference type="GO" id="GO:0045211">
    <property type="term" value="C:postsynaptic membrane"/>
    <property type="evidence" value="ECO:0000304"/>
    <property type="project" value="UniProtKB"/>
</dbReference>
<dbReference type="GO" id="GO:0042734">
    <property type="term" value="C:presynaptic membrane"/>
    <property type="evidence" value="ECO:0000314"/>
    <property type="project" value="SynGO"/>
</dbReference>
<dbReference type="GO" id="GO:0043235">
    <property type="term" value="C:receptor complex"/>
    <property type="evidence" value="ECO:0000314"/>
    <property type="project" value="UniProtKB"/>
</dbReference>
<dbReference type="GO" id="GO:0045202">
    <property type="term" value="C:synapse"/>
    <property type="evidence" value="ECO:0000266"/>
    <property type="project" value="RGD"/>
</dbReference>
<dbReference type="GO" id="GO:0043195">
    <property type="term" value="C:terminal bouton"/>
    <property type="evidence" value="ECO:0000314"/>
    <property type="project" value="RGD"/>
</dbReference>
<dbReference type="GO" id="GO:0005234">
    <property type="term" value="F:extracellularly glutamate-gated ion channel activity"/>
    <property type="evidence" value="ECO:0000314"/>
    <property type="project" value="RGD"/>
</dbReference>
<dbReference type="GO" id="GO:0016595">
    <property type="term" value="F:glutamate binding"/>
    <property type="evidence" value="ECO:0000314"/>
    <property type="project" value="RGD"/>
</dbReference>
<dbReference type="GO" id="GO:0022849">
    <property type="term" value="F:glutamate-gated calcium ion channel activity"/>
    <property type="evidence" value="ECO:0000314"/>
    <property type="project" value="UniProtKB"/>
</dbReference>
<dbReference type="GO" id="GO:0004970">
    <property type="term" value="F:glutamate-gated receptor activity"/>
    <property type="evidence" value="ECO:0000314"/>
    <property type="project" value="UniProtKB"/>
</dbReference>
<dbReference type="GO" id="GO:0042802">
    <property type="term" value="F:identical protein binding"/>
    <property type="evidence" value="ECO:0000353"/>
    <property type="project" value="IntAct"/>
</dbReference>
<dbReference type="GO" id="GO:0015277">
    <property type="term" value="F:kainate selective glutamate receptor activity"/>
    <property type="evidence" value="ECO:0000314"/>
    <property type="project" value="UniProtKB"/>
</dbReference>
<dbReference type="GO" id="GO:0005313">
    <property type="term" value="F:L-glutamate transmembrane transporter activity"/>
    <property type="evidence" value="ECO:0000266"/>
    <property type="project" value="RGD"/>
</dbReference>
<dbReference type="GO" id="GO:0099507">
    <property type="term" value="F:ligand-gated monoatomic ion channel activity involved in regulation of presynaptic membrane potential"/>
    <property type="evidence" value="ECO:0000314"/>
    <property type="project" value="SynGO"/>
</dbReference>
<dbReference type="GO" id="GO:0097110">
    <property type="term" value="F:scaffold protein binding"/>
    <property type="evidence" value="ECO:0000314"/>
    <property type="project" value="RGD"/>
</dbReference>
<dbReference type="GO" id="GO:0000149">
    <property type="term" value="F:SNARE binding"/>
    <property type="evidence" value="ECO:0000353"/>
    <property type="project" value="RGD"/>
</dbReference>
<dbReference type="GO" id="GO:1904315">
    <property type="term" value="F:transmitter-gated monoatomic ion channel activity involved in regulation of postsynaptic membrane potential"/>
    <property type="evidence" value="ECO:0000318"/>
    <property type="project" value="GO_Central"/>
</dbReference>
<dbReference type="GO" id="GO:0030534">
    <property type="term" value="P:adult behavior"/>
    <property type="evidence" value="ECO:0000266"/>
    <property type="project" value="RGD"/>
</dbReference>
<dbReference type="GO" id="GO:0048266">
    <property type="term" value="P:behavioral response to pain"/>
    <property type="evidence" value="ECO:0000266"/>
    <property type="project" value="RGD"/>
</dbReference>
<dbReference type="GO" id="GO:0007268">
    <property type="term" value="P:chemical synaptic transmission"/>
    <property type="evidence" value="ECO:0000304"/>
    <property type="project" value="UniProtKB"/>
</dbReference>
<dbReference type="GO" id="GO:0051649">
    <property type="term" value="P:establishment of localization in cell"/>
    <property type="evidence" value="ECO:0000266"/>
    <property type="project" value="RGD"/>
</dbReference>
<dbReference type="GO" id="GO:0060079">
    <property type="term" value="P:excitatory postsynaptic potential"/>
    <property type="evidence" value="ECO:0000266"/>
    <property type="project" value="RGD"/>
</dbReference>
<dbReference type="GO" id="GO:0014051">
    <property type="term" value="P:gamma-aminobutyric acid secretion"/>
    <property type="evidence" value="ECO:0000266"/>
    <property type="project" value="RGD"/>
</dbReference>
<dbReference type="GO" id="GO:0060080">
    <property type="term" value="P:inhibitory postsynaptic potential"/>
    <property type="evidence" value="ECO:0000266"/>
    <property type="project" value="RGD"/>
</dbReference>
<dbReference type="GO" id="GO:0035235">
    <property type="term" value="P:ionotropic glutamate receptor signaling pathway"/>
    <property type="evidence" value="ECO:0000314"/>
    <property type="project" value="RGD"/>
</dbReference>
<dbReference type="GO" id="GO:0051899">
    <property type="term" value="P:membrane depolarization"/>
    <property type="evidence" value="ECO:0000266"/>
    <property type="project" value="RGD"/>
</dbReference>
<dbReference type="GO" id="GO:0050804">
    <property type="term" value="P:modulation of chemical synaptic transmission"/>
    <property type="evidence" value="ECO:0000318"/>
    <property type="project" value="GO_Central"/>
</dbReference>
<dbReference type="GO" id="GO:0098815">
    <property type="term" value="P:modulation of excitatory postsynaptic potential"/>
    <property type="evidence" value="ECO:0000315"/>
    <property type="project" value="RGD"/>
</dbReference>
<dbReference type="GO" id="GO:0032229">
    <property type="term" value="P:negative regulation of synaptic transmission, GABAergic"/>
    <property type="evidence" value="ECO:0000314"/>
    <property type="project" value="RGD"/>
</dbReference>
<dbReference type="GO" id="GO:0051967">
    <property type="term" value="P:negative regulation of synaptic transmission, glutamatergic"/>
    <property type="evidence" value="ECO:0000314"/>
    <property type="project" value="RGD"/>
</dbReference>
<dbReference type="GO" id="GO:0007399">
    <property type="term" value="P:nervous system development"/>
    <property type="evidence" value="ECO:0000315"/>
    <property type="project" value="RGD"/>
</dbReference>
<dbReference type="GO" id="GO:0014054">
    <property type="term" value="P:positive regulation of gamma-aminobutyric acid secretion"/>
    <property type="evidence" value="ECO:0000266"/>
    <property type="project" value="RGD"/>
</dbReference>
<dbReference type="GO" id="GO:0032230">
    <property type="term" value="P:positive regulation of synaptic transmission, GABAergic"/>
    <property type="evidence" value="ECO:0000314"/>
    <property type="project" value="RGD"/>
</dbReference>
<dbReference type="GO" id="GO:0099171">
    <property type="term" value="P:presynaptic modulation of chemical synaptic transmission"/>
    <property type="evidence" value="ECO:0000266"/>
    <property type="project" value="RGD"/>
</dbReference>
<dbReference type="GO" id="GO:0042391">
    <property type="term" value="P:regulation of membrane potential"/>
    <property type="evidence" value="ECO:0000266"/>
    <property type="project" value="RGD"/>
</dbReference>
<dbReference type="GO" id="GO:0048172">
    <property type="term" value="P:regulation of short-term neuronal synaptic plasticity"/>
    <property type="evidence" value="ECO:0000314"/>
    <property type="project" value="RGD"/>
</dbReference>
<dbReference type="GO" id="GO:0048167">
    <property type="term" value="P:regulation of synaptic plasticity"/>
    <property type="evidence" value="ECO:0000304"/>
    <property type="project" value="UniProtKB"/>
</dbReference>
<dbReference type="GO" id="GO:0051932">
    <property type="term" value="P:synaptic transmission, GABAergic"/>
    <property type="evidence" value="ECO:0000266"/>
    <property type="project" value="RGD"/>
</dbReference>
<dbReference type="GO" id="GO:0035249">
    <property type="term" value="P:synaptic transmission, glutamatergic"/>
    <property type="evidence" value="ECO:0000266"/>
    <property type="project" value="RGD"/>
</dbReference>
<dbReference type="CDD" id="cd06382">
    <property type="entry name" value="PBP1_iGluR_Kainate"/>
    <property type="match status" value="1"/>
</dbReference>
<dbReference type="FunFam" id="3.40.50.2300:FF:000010">
    <property type="entry name" value="Glutamate ionotropic receptor kainate type subunit 1"/>
    <property type="match status" value="1"/>
</dbReference>
<dbReference type="FunFam" id="3.40.190.10:FF:000210">
    <property type="entry name" value="Glutamate receptor ionotropic, kainate 1"/>
    <property type="match status" value="1"/>
</dbReference>
<dbReference type="FunFam" id="3.40.190.10:FF:000240">
    <property type="entry name" value="Glutamate receptor ionotropic, kainate 2"/>
    <property type="match status" value="1"/>
</dbReference>
<dbReference type="FunFam" id="1.10.287.70:FF:000010">
    <property type="entry name" value="Putative glutamate receptor ionotropic kainate 1"/>
    <property type="match status" value="1"/>
</dbReference>
<dbReference type="Gene3D" id="1.10.287.70">
    <property type="match status" value="1"/>
</dbReference>
<dbReference type="Gene3D" id="3.40.50.2300">
    <property type="match status" value="2"/>
</dbReference>
<dbReference type="Gene3D" id="3.40.190.10">
    <property type="entry name" value="Periplasmic binding protein-like II"/>
    <property type="match status" value="1"/>
</dbReference>
<dbReference type="InterPro" id="IPR001828">
    <property type="entry name" value="ANF_lig-bd_rcpt"/>
</dbReference>
<dbReference type="InterPro" id="IPR019594">
    <property type="entry name" value="Glu/Gly-bd"/>
</dbReference>
<dbReference type="InterPro" id="IPR001508">
    <property type="entry name" value="Iono_Glu_rcpt_met"/>
</dbReference>
<dbReference type="InterPro" id="IPR015683">
    <property type="entry name" value="Ionotropic_Glu_rcpt"/>
</dbReference>
<dbReference type="InterPro" id="IPR001320">
    <property type="entry name" value="Iontro_rcpt_C"/>
</dbReference>
<dbReference type="InterPro" id="IPR028082">
    <property type="entry name" value="Peripla_BP_I"/>
</dbReference>
<dbReference type="PANTHER" id="PTHR18966">
    <property type="entry name" value="IONOTROPIC GLUTAMATE RECEPTOR"/>
    <property type="match status" value="1"/>
</dbReference>
<dbReference type="Pfam" id="PF01094">
    <property type="entry name" value="ANF_receptor"/>
    <property type="match status" value="1"/>
</dbReference>
<dbReference type="Pfam" id="PF00060">
    <property type="entry name" value="Lig_chan"/>
    <property type="match status" value="1"/>
</dbReference>
<dbReference type="Pfam" id="PF10613">
    <property type="entry name" value="Lig_chan-Glu_bd"/>
    <property type="match status" value="1"/>
</dbReference>
<dbReference type="PRINTS" id="PR00177">
    <property type="entry name" value="NMDARECEPTOR"/>
</dbReference>
<dbReference type="SMART" id="SM00918">
    <property type="entry name" value="Lig_chan-Glu_bd"/>
    <property type="match status" value="1"/>
</dbReference>
<dbReference type="SMART" id="SM00079">
    <property type="entry name" value="PBPe"/>
    <property type="match status" value="1"/>
</dbReference>
<dbReference type="SUPFAM" id="SSF53822">
    <property type="entry name" value="Periplasmic binding protein-like I"/>
    <property type="match status" value="1"/>
</dbReference>
<dbReference type="SUPFAM" id="SSF53850">
    <property type="entry name" value="Periplasmic binding protein-like II"/>
    <property type="match status" value="1"/>
</dbReference>
<gene>
    <name type="primary">Grik1</name>
    <name type="synonym">Glur5</name>
</gene>
<feature type="signal peptide" evidence="2">
    <location>
        <begin position="1"/>
        <end position="30"/>
    </location>
</feature>
<feature type="chain" id="PRO_0000011543" description="Glutamate receptor ionotropic, kainate 1">
    <location>
        <begin position="31"/>
        <end position="949"/>
    </location>
</feature>
<feature type="topological domain" description="Extracellular" evidence="2">
    <location>
        <begin position="31"/>
        <end position="576"/>
    </location>
</feature>
<feature type="transmembrane region" description="Helical" evidence="2">
    <location>
        <begin position="577"/>
        <end position="597"/>
    </location>
</feature>
<feature type="topological domain" description="Cytoplasmic" evidence="2">
    <location>
        <begin position="598"/>
        <end position="653"/>
    </location>
</feature>
<feature type="transmembrane region" description="Helical" evidence="2">
    <location>
        <begin position="654"/>
        <end position="674"/>
    </location>
</feature>
<feature type="topological domain" description="Extracellular" evidence="2">
    <location>
        <begin position="675"/>
        <end position="834"/>
    </location>
</feature>
<feature type="transmembrane region" description="Helical" evidence="2">
    <location>
        <begin position="835"/>
        <end position="855"/>
    </location>
</feature>
<feature type="topological domain" description="Cytoplasmic" evidence="2">
    <location>
        <begin position="856"/>
        <end position="949"/>
    </location>
</feature>
<feature type="binding site" evidence="8 17">
    <location>
        <position position="531"/>
    </location>
    <ligand>
        <name>L-glutamate</name>
        <dbReference type="ChEBI" id="CHEBI:29985"/>
    </ligand>
</feature>
<feature type="binding site" evidence="8 17">
    <location>
        <position position="533"/>
    </location>
    <ligand>
        <name>L-glutamate</name>
        <dbReference type="ChEBI" id="CHEBI:29985"/>
    </ligand>
</feature>
<feature type="binding site" evidence="8 9 17">
    <location>
        <position position="538"/>
    </location>
    <ligand>
        <name>L-glutamate</name>
        <dbReference type="ChEBI" id="CHEBI:29985"/>
    </ligand>
</feature>
<feature type="binding site" evidence="8 17">
    <location>
        <position position="704"/>
    </location>
    <ligand>
        <name>L-glutamate</name>
        <dbReference type="ChEBI" id="CHEBI:29985"/>
    </ligand>
</feature>
<feature type="binding site" evidence="8 17">
    <location>
        <position position="705"/>
    </location>
    <ligand>
        <name>L-glutamate</name>
        <dbReference type="ChEBI" id="CHEBI:29985"/>
    </ligand>
</feature>
<feature type="binding site" evidence="8 9 17">
    <location>
        <position position="753"/>
    </location>
    <ligand>
        <name>L-glutamate</name>
        <dbReference type="ChEBI" id="CHEBI:29985"/>
    </ligand>
</feature>
<feature type="modified residue" description="Phosphoserine; by PKC" evidence="2">
    <location>
        <position position="725"/>
    </location>
</feature>
<feature type="modified residue" description="Phosphothreonine; by PKC" evidence="2">
    <location>
        <position position="761"/>
    </location>
</feature>
<feature type="glycosylation site" description="N-linked (GlcNAc...) asparagine" evidence="2">
    <location>
        <position position="68"/>
    </location>
</feature>
<feature type="glycosylation site" description="N-linked (GlcNAc...) asparagine" evidence="2">
    <location>
        <position position="74"/>
    </location>
</feature>
<feature type="glycosylation site" description="N-linked (GlcNAc...) asparagine" evidence="2">
    <location>
        <position position="276"/>
    </location>
</feature>
<feature type="glycosylation site" description="N-linked (GlcNAc...) asparagine" evidence="2">
    <location>
        <position position="379"/>
    </location>
</feature>
<feature type="glycosylation site" description="N-linked (GlcNAc...) asparagine" evidence="2">
    <location>
        <position position="428"/>
    </location>
</feature>
<feature type="glycosylation site" description="N-linked (GlcNAc...) asparagine" evidence="2">
    <location>
        <position position="439"/>
    </location>
</feature>
<feature type="glycosylation site" description="N-linked (GlcNAc...) asparagine" evidence="2">
    <location>
        <position position="446"/>
    </location>
</feature>
<feature type="glycosylation site" description="N-linked (GlcNAc...) asparagine" evidence="2">
    <location>
        <position position="561"/>
    </location>
</feature>
<feature type="glycosylation site" description="N-linked (GlcNAc...) asparagine" evidence="2">
    <location>
        <position position="766"/>
    </location>
</feature>
<feature type="disulfide bond" evidence="9">
    <location>
        <begin position="765"/>
        <end position="819"/>
    </location>
</feature>
<feature type="splice variant" id="VSP_000129" description="In isoform Glur5-2." evidence="15">
    <location>
        <begin position="402"/>
        <end position="416"/>
    </location>
</feature>
<feature type="splice variant" id="VSP_000130" description="In isoform Glur5-2B and isoform Glur5-2." evidence="15">
    <location>
        <begin position="870"/>
        <end position="898"/>
    </location>
</feature>
<feature type="splice variant" id="VSP_000131" description="In isoform Glur5-2A." evidence="15">
    <original>KG</original>
    <variation>HY</variation>
    <location>
        <begin position="870"/>
        <end position="871"/>
    </location>
</feature>
<feature type="splice variant" id="VSP_000132" description="In isoform Glur5-2A." evidence="15">
    <location>
        <begin position="872"/>
        <end position="949"/>
    </location>
</feature>
<feature type="sequence variant" description="In RNA edited version.">
    <original>Q</original>
    <variation>R</variation>
    <location>
        <position position="636"/>
    </location>
</feature>
<feature type="sequence conflict" description="In Ref. 2; AAA02874." evidence="15" ref="2">
    <original>K</original>
    <variation>L</variation>
    <location>
        <position position="282"/>
    </location>
</feature>
<feature type="sequence conflict" description="In Ref. 2; AAA02874." evidence="15" ref="2">
    <original>CA</original>
    <variation>WR</variation>
    <location>
        <begin position="354"/>
        <end position="355"/>
    </location>
</feature>
<feature type="sequence conflict" description="In Ref. 2; AAA02874." evidence="15" ref="2">
    <original>A</original>
    <variation>G</variation>
    <location>
        <position position="477"/>
    </location>
</feature>
<feature type="strand" evidence="18">
    <location>
        <begin position="449"/>
        <end position="453"/>
    </location>
</feature>
<feature type="turn" evidence="18">
    <location>
        <begin position="457"/>
        <end position="459"/>
    </location>
</feature>
<feature type="strand" evidence="18">
    <location>
        <begin position="460"/>
        <end position="462"/>
    </location>
</feature>
<feature type="helix" evidence="18">
    <location>
        <begin position="471"/>
        <end position="474"/>
    </location>
</feature>
<feature type="strand" evidence="18">
    <location>
        <begin position="475"/>
        <end position="477"/>
    </location>
</feature>
<feature type="helix" evidence="18">
    <location>
        <begin position="478"/>
        <end position="490"/>
    </location>
</feature>
<feature type="strand" evidence="18">
    <location>
        <begin position="494"/>
        <end position="498"/>
    </location>
</feature>
<feature type="helix" evidence="18">
    <location>
        <begin position="515"/>
        <end position="521"/>
    </location>
</feature>
<feature type="strand" evidence="18">
    <location>
        <begin position="526"/>
        <end position="528"/>
    </location>
</feature>
<feature type="helix" evidence="18">
    <location>
        <begin position="536"/>
        <end position="539"/>
    </location>
</feature>
<feature type="strand" evidence="18">
    <location>
        <begin position="542"/>
        <end position="544"/>
    </location>
</feature>
<feature type="strand" evidence="18">
    <location>
        <begin position="548"/>
        <end position="551"/>
    </location>
</feature>
<feature type="strand" evidence="18">
    <location>
        <begin position="553"/>
        <end position="559"/>
    </location>
</feature>
<feature type="helix" evidence="18">
    <location>
        <begin position="686"/>
        <end position="690"/>
    </location>
</feature>
<feature type="strand" evidence="18">
    <location>
        <begin position="693"/>
        <end position="698"/>
    </location>
</feature>
<feature type="helix" evidence="18">
    <location>
        <begin position="704"/>
        <end position="711"/>
    </location>
</feature>
<feature type="helix" evidence="18">
    <location>
        <begin position="715"/>
        <end position="724"/>
    </location>
</feature>
<feature type="helix" evidence="19">
    <location>
        <begin position="726"/>
        <end position="729"/>
    </location>
</feature>
<feature type="strand" evidence="18">
    <location>
        <begin position="731"/>
        <end position="735"/>
    </location>
</feature>
<feature type="helix" evidence="18">
    <location>
        <begin position="736"/>
        <end position="745"/>
    </location>
</feature>
<feature type="strand" evidence="18">
    <location>
        <begin position="746"/>
        <end position="753"/>
    </location>
</feature>
<feature type="helix" evidence="18">
    <location>
        <begin position="754"/>
        <end position="763"/>
    </location>
</feature>
<feature type="strand" evidence="18">
    <location>
        <begin position="767"/>
        <end position="771"/>
    </location>
</feature>
<feature type="strand" evidence="18">
    <location>
        <begin position="777"/>
        <end position="779"/>
    </location>
</feature>
<feature type="strand" evidence="18">
    <location>
        <begin position="782"/>
        <end position="784"/>
    </location>
</feature>
<feature type="helix" evidence="18">
    <location>
        <begin position="789"/>
        <end position="802"/>
    </location>
</feature>
<feature type="helix" evidence="18">
    <location>
        <begin position="805"/>
        <end position="813"/>
    </location>
</feature>
<organism>
    <name type="scientific">Rattus norvegicus</name>
    <name type="common">Rat</name>
    <dbReference type="NCBI Taxonomy" id="10116"/>
    <lineage>
        <taxon>Eukaryota</taxon>
        <taxon>Metazoa</taxon>
        <taxon>Chordata</taxon>
        <taxon>Craniata</taxon>
        <taxon>Vertebrata</taxon>
        <taxon>Euteleostomi</taxon>
        <taxon>Mammalia</taxon>
        <taxon>Eutheria</taxon>
        <taxon>Euarchontoglires</taxon>
        <taxon>Glires</taxon>
        <taxon>Rodentia</taxon>
        <taxon>Myomorpha</taxon>
        <taxon>Muroidea</taxon>
        <taxon>Muridae</taxon>
        <taxon>Murinae</taxon>
        <taxon>Rattus</taxon>
    </lineage>
</organism>
<sequence>MERSTVLIQPGLWTRDTSWTLLYFLCYILPQTSPQVLRIGGIFETVENEPVNVEELAFKFAVTSINRNRTLMPNTTLTYDIQRINLFDSFEASRRACDQLALGVAALFGPSHSSSVSAVQSICNALEVPHIQTRWKHPSVDSRDLFYINLYPDYAAISRAVLDLVLYYNWKTVTVVYEDSTGLIRLQELIKAPSRYNIKIKIRQLPPANKDAKPLLKEMKKSKEFYVIFDCSHETAAEILKQILFMGMMTEYYHYFFTTLDLFALDLELYRYSGVNMTGFRKLNIDNPHVSSIIEKWSMERLQAPPRPETGLLDGMMTTEAALMYDAVYMVAIASHRASQLTVSSLQCHRHKPCALGPRFMNLIKEARWDGLTGRITFNKTDGLRKDFDLDIISLKEEGTEKASGEVSKHLYKVWKKIGIWNSNSGLNMTDGNRDRSNNITDSLANRTLIVTTILEEPYVMYRKSDKPLYGNDRFEAYCLDLLKELSNILGFLYDVKLVPDGKYGAQNDKGEWNGMVKELIDHRADLAVAPLTITYVREKVIDFSKPFMTLGISILYRKPNGTNPGVFSFLNPLSPDIWMYVLLACLGVSCVLFVIARFTPYEWYNPHPCNPDSDVVENNFTLLNSFWFGVGALMQQGSELMPKALSTRIVGGIWWFFTLIIISSYTANLAAFLTVERMESPIDSADDLAKQTKIEYGAVRDGSTMTFFKKSKISTYEKMWAFMSSRQQSALVKNSDEGIQRVLTTDYALLMESTSIEYVTQRNCNLTQIGGLIDSKGYGVGTPIGSPYRDKITIAILQLQEEGKLHMMKEKWWRGNGCPEEDSKEASALGVENIGGIFIVLAAGLVLSVFVAIGEFLYKSRKNNDVEQKGKSSRLRFYFRNKVRFHGSKKESLGVEKCLSFNAIMEELGISLKNQKKLKKKSRTKGKSSFTSILTCHQRRTQRKETVA</sequence>